<name>RL33_FRATO</name>
<evidence type="ECO:0000255" key="1">
    <source>
        <dbReference type="HAMAP-Rule" id="MF_00294"/>
    </source>
</evidence>
<evidence type="ECO:0000305" key="2"/>
<keyword id="KW-0687">Ribonucleoprotein</keyword>
<keyword id="KW-0689">Ribosomal protein</keyword>
<protein>
    <recommendedName>
        <fullName evidence="1">Large ribosomal subunit protein bL33</fullName>
    </recommendedName>
    <alternativeName>
        <fullName evidence="2">50S ribosomal protein L33</fullName>
    </alternativeName>
</protein>
<organism>
    <name type="scientific">Francisella tularensis subsp. holarctica (strain OSU18)</name>
    <dbReference type="NCBI Taxonomy" id="393011"/>
    <lineage>
        <taxon>Bacteria</taxon>
        <taxon>Pseudomonadati</taxon>
        <taxon>Pseudomonadota</taxon>
        <taxon>Gammaproteobacteria</taxon>
        <taxon>Thiotrichales</taxon>
        <taxon>Francisellaceae</taxon>
        <taxon>Francisella</taxon>
    </lineage>
</organism>
<reference key="1">
    <citation type="journal article" date="2006" name="J. Bacteriol.">
        <title>Chromosome rearrangement and diversification of Francisella tularensis revealed by the type B (OSU18) genome sequence.</title>
        <authorList>
            <person name="Petrosino J.F."/>
            <person name="Xiang Q."/>
            <person name="Karpathy S.E."/>
            <person name="Jiang H."/>
            <person name="Yerrapragada S."/>
            <person name="Liu Y."/>
            <person name="Gioia J."/>
            <person name="Hemphill L."/>
            <person name="Gonzalez A."/>
            <person name="Raghavan T.M."/>
            <person name="Uzman A."/>
            <person name="Fox G.E."/>
            <person name="Highlander S."/>
            <person name="Reichard M."/>
            <person name="Morton R.J."/>
            <person name="Clinkenbeard K.D."/>
            <person name="Weinstock G.M."/>
        </authorList>
    </citation>
    <scope>NUCLEOTIDE SEQUENCE [LARGE SCALE GENOMIC DNA]</scope>
    <source>
        <strain>OSU18</strain>
    </source>
</reference>
<comment type="similarity">
    <text evidence="1">Belongs to the bacterial ribosomal protein bL33 family.</text>
</comment>
<feature type="chain" id="PRO_0000356464" description="Large ribosomal subunit protein bL33">
    <location>
        <begin position="1"/>
        <end position="51"/>
    </location>
</feature>
<accession>Q0BN38</accession>
<dbReference type="EMBL" id="CP000437">
    <property type="protein sequence ID" value="ABI82496.1"/>
    <property type="molecule type" value="Genomic_DNA"/>
</dbReference>
<dbReference type="RefSeq" id="WP_003014820.1">
    <property type="nucleotide sequence ID" value="NC_017463.1"/>
</dbReference>
<dbReference type="SMR" id="Q0BN38"/>
<dbReference type="GeneID" id="75264166"/>
<dbReference type="KEGG" id="fth:FTH_0518"/>
<dbReference type="GO" id="GO:0022625">
    <property type="term" value="C:cytosolic large ribosomal subunit"/>
    <property type="evidence" value="ECO:0007669"/>
    <property type="project" value="TreeGrafter"/>
</dbReference>
<dbReference type="GO" id="GO:0003735">
    <property type="term" value="F:structural constituent of ribosome"/>
    <property type="evidence" value="ECO:0007669"/>
    <property type="project" value="InterPro"/>
</dbReference>
<dbReference type="GO" id="GO:0006412">
    <property type="term" value="P:translation"/>
    <property type="evidence" value="ECO:0007669"/>
    <property type="project" value="UniProtKB-UniRule"/>
</dbReference>
<dbReference type="FunFam" id="2.20.28.120:FF:000001">
    <property type="entry name" value="50S ribosomal protein L33"/>
    <property type="match status" value="1"/>
</dbReference>
<dbReference type="Gene3D" id="2.20.28.120">
    <property type="entry name" value="Ribosomal protein L33"/>
    <property type="match status" value="1"/>
</dbReference>
<dbReference type="HAMAP" id="MF_00294">
    <property type="entry name" value="Ribosomal_bL33"/>
    <property type="match status" value="1"/>
</dbReference>
<dbReference type="InterPro" id="IPR001705">
    <property type="entry name" value="Ribosomal_bL33"/>
</dbReference>
<dbReference type="InterPro" id="IPR018264">
    <property type="entry name" value="Ribosomal_bL33_CS"/>
</dbReference>
<dbReference type="InterPro" id="IPR038584">
    <property type="entry name" value="Ribosomal_bL33_sf"/>
</dbReference>
<dbReference type="InterPro" id="IPR011332">
    <property type="entry name" value="Ribosomal_zn-bd"/>
</dbReference>
<dbReference type="NCBIfam" id="NF001860">
    <property type="entry name" value="PRK00595.1"/>
    <property type="match status" value="1"/>
</dbReference>
<dbReference type="NCBIfam" id="TIGR01023">
    <property type="entry name" value="rpmG_bact"/>
    <property type="match status" value="1"/>
</dbReference>
<dbReference type="PANTHER" id="PTHR15238">
    <property type="entry name" value="54S RIBOSOMAL PROTEIN L39, MITOCHONDRIAL"/>
    <property type="match status" value="1"/>
</dbReference>
<dbReference type="PANTHER" id="PTHR15238:SF1">
    <property type="entry name" value="LARGE RIBOSOMAL SUBUNIT PROTEIN BL33M"/>
    <property type="match status" value="1"/>
</dbReference>
<dbReference type="Pfam" id="PF00471">
    <property type="entry name" value="Ribosomal_L33"/>
    <property type="match status" value="1"/>
</dbReference>
<dbReference type="SUPFAM" id="SSF57829">
    <property type="entry name" value="Zn-binding ribosomal proteins"/>
    <property type="match status" value="1"/>
</dbReference>
<dbReference type="PROSITE" id="PS00582">
    <property type="entry name" value="RIBOSOMAL_L33"/>
    <property type="match status" value="1"/>
</dbReference>
<proteinExistence type="inferred from homology"/>
<gene>
    <name evidence="1" type="primary">rpmG</name>
    <name type="ordered locus">FTH_0518</name>
</gene>
<sequence>MREKIRLVSSAKTGHFYTTTKNKKEMPNKMEIKKYDPVVRKHVMYKEAKIK</sequence>